<accession>O15528</accession>
<accession>B2RC61</accession>
<accession>Q548T3</accession>
<gene>
    <name type="primary">CYP27B1</name>
    <name type="synonym">CYP1ALPHA</name>
    <name type="synonym">CYP27B</name>
</gene>
<protein>
    <recommendedName>
        <fullName>25-hydroxyvitamin D-1 alpha hydroxylase, mitochondrial</fullName>
        <ecNumber evidence="5">1.14.15.18</ecNumber>
    </recommendedName>
    <alternativeName>
        <fullName>25-OHD-1 alpha-hydroxylase</fullName>
    </alternativeName>
    <alternativeName>
        <fullName>25-hydroxyvitamin D(3) 1-alpha-hydroxylase</fullName>
        <shortName>VD3 1A hydroxylase</shortName>
    </alternativeName>
    <alternativeName>
        <fullName>Calcidiol 1-monooxygenase</fullName>
    </alternativeName>
    <alternativeName>
        <fullName>Cytochrome P450 subfamily XXVIIB polypeptide 1</fullName>
    </alternativeName>
    <alternativeName>
        <fullName>Cytochrome P450C1 alpha</fullName>
    </alternativeName>
    <alternativeName>
        <fullName>Cytochrome P450VD1-alpha</fullName>
    </alternativeName>
    <alternativeName>
        <fullName>Cytochrome p450 27B1</fullName>
    </alternativeName>
</protein>
<organism>
    <name type="scientific">Homo sapiens</name>
    <name type="common">Human</name>
    <dbReference type="NCBI Taxonomy" id="9606"/>
    <lineage>
        <taxon>Eukaryota</taxon>
        <taxon>Metazoa</taxon>
        <taxon>Chordata</taxon>
        <taxon>Craniata</taxon>
        <taxon>Vertebrata</taxon>
        <taxon>Euteleostomi</taxon>
        <taxon>Mammalia</taxon>
        <taxon>Eutheria</taxon>
        <taxon>Euarchontoglires</taxon>
        <taxon>Primates</taxon>
        <taxon>Haplorrhini</taxon>
        <taxon>Catarrhini</taxon>
        <taxon>Hominidae</taxon>
        <taxon>Homo</taxon>
    </lineage>
</organism>
<evidence type="ECO:0000250" key="1"/>
<evidence type="ECO:0000250" key="2">
    <source>
        <dbReference type="UniProtKB" id="O35084"/>
    </source>
</evidence>
<evidence type="ECO:0000255" key="3"/>
<evidence type="ECO:0000269" key="4">
    <source>
    </source>
</evidence>
<evidence type="ECO:0000269" key="5">
    <source>
    </source>
</evidence>
<evidence type="ECO:0000269" key="6">
    <source>
    </source>
</evidence>
<evidence type="ECO:0000269" key="7">
    <source>
    </source>
</evidence>
<evidence type="ECO:0000269" key="8">
    <source>
    </source>
</evidence>
<evidence type="ECO:0000269" key="9">
    <source>
    </source>
</evidence>
<evidence type="ECO:0000269" key="10">
    <source>
    </source>
</evidence>
<evidence type="ECO:0000269" key="11">
    <source>
    </source>
</evidence>
<evidence type="ECO:0000269" key="12">
    <source ref="6"/>
</evidence>
<evidence type="ECO:0000305" key="13"/>
<evidence type="ECO:0000305" key="14">
    <source>
    </source>
</evidence>
<evidence type="ECO:0000305" key="15">
    <source>
    </source>
</evidence>
<comment type="function">
    <text evidence="5 6 7 8 10">A cytochrome P450 monooxygenase involved in vitamin D metabolism and in calcium and phosphorus homeostasis. Catalyzes the rate-limiting step in the activation of vitamin D in the kidney, namely the hydroxylation of 25-hydroxyvitamin D3/calcidiol at the C1alpha-position to form the hormonally active form of vitamin D3, 1alpha,25-dihydroxyvitamin D3/calcitriol that acts via the vitamin D receptor (VDR) (PubMed:10518789, PubMed:10566658, PubMed:12050193, PubMed:22862690, PubMed:9486994). Has 1alpha-hydroxylase activity on vitamin D intermediates of the CYP24A1-mediated inactivation pathway (PubMed:10518789, PubMed:22862690). Converts 24R,25-dihydroxyvitamin D3/secalciferol to 1-alpha,24,25-trihydroxyvitamin D3, an active ligand of VDR. Also active on 25-hydroxyvitamin D2 (PubMed:10518789). Mechanistically, uses molecular oxygen inserting one oxygen atom into a substrate, and reducing the second into a water molecule, with two electrons provided by NADPH via FDXR/adrenodoxin reductase and FDX1/adrenodoxin (PubMed:22862690).</text>
</comment>
<comment type="catalytic activity">
    <reaction evidence="5 6 7 8 10">
        <text>calcidiol + 2 reduced [adrenodoxin] + O2 + 2 H(+) = calcitriol + 2 oxidized [adrenodoxin] + H2O</text>
        <dbReference type="Rhea" id="RHEA:20573"/>
        <dbReference type="Rhea" id="RHEA-COMP:9998"/>
        <dbReference type="Rhea" id="RHEA-COMP:9999"/>
        <dbReference type="ChEBI" id="CHEBI:15377"/>
        <dbReference type="ChEBI" id="CHEBI:15378"/>
        <dbReference type="ChEBI" id="CHEBI:15379"/>
        <dbReference type="ChEBI" id="CHEBI:17823"/>
        <dbReference type="ChEBI" id="CHEBI:17933"/>
        <dbReference type="ChEBI" id="CHEBI:33737"/>
        <dbReference type="ChEBI" id="CHEBI:33738"/>
        <dbReference type="EC" id="1.14.15.18"/>
    </reaction>
    <physiologicalReaction direction="left-to-right" evidence="15">
        <dbReference type="Rhea" id="RHEA:20574"/>
    </physiologicalReaction>
</comment>
<comment type="catalytic activity">
    <reaction evidence="5">
        <text>secalciferol + 2 reduced [adrenodoxin] + O2 + 2 H(+) = calcitetrol + 2 oxidized [adrenodoxin] + H2O</text>
        <dbReference type="Rhea" id="RHEA:49064"/>
        <dbReference type="Rhea" id="RHEA-COMP:9998"/>
        <dbReference type="Rhea" id="RHEA-COMP:9999"/>
        <dbReference type="ChEBI" id="CHEBI:15377"/>
        <dbReference type="ChEBI" id="CHEBI:15378"/>
        <dbReference type="ChEBI" id="CHEBI:15379"/>
        <dbReference type="ChEBI" id="CHEBI:28818"/>
        <dbReference type="ChEBI" id="CHEBI:33737"/>
        <dbReference type="ChEBI" id="CHEBI:33738"/>
        <dbReference type="ChEBI" id="CHEBI:47799"/>
        <dbReference type="EC" id="1.14.15.18"/>
    </reaction>
    <physiologicalReaction direction="left-to-right" evidence="14">
        <dbReference type="Rhea" id="RHEA:49065"/>
    </physiologicalReaction>
</comment>
<comment type="catalytic activity">
    <reaction evidence="8">
        <text>25-hydroxy-24-oxocalciol + 2 reduced [adrenodoxin] + O2 + 2 H(+) = (1S)-1,25-dihydroxy-24-oxocalciol + 2 oxidized [adrenodoxin] + H2O</text>
        <dbReference type="Rhea" id="RHEA:49068"/>
        <dbReference type="Rhea" id="RHEA-COMP:9998"/>
        <dbReference type="Rhea" id="RHEA-COMP:9999"/>
        <dbReference type="ChEBI" id="CHEBI:15377"/>
        <dbReference type="ChEBI" id="CHEBI:15378"/>
        <dbReference type="ChEBI" id="CHEBI:15379"/>
        <dbReference type="ChEBI" id="CHEBI:33737"/>
        <dbReference type="ChEBI" id="CHEBI:33738"/>
        <dbReference type="ChEBI" id="CHEBI:47805"/>
        <dbReference type="ChEBI" id="CHEBI:47812"/>
    </reaction>
    <physiologicalReaction direction="left-to-right" evidence="15">
        <dbReference type="Rhea" id="RHEA:49069"/>
    </physiologicalReaction>
</comment>
<comment type="catalytic activity">
    <reaction evidence="8">
        <text>25-hydroxyvitamin D2 + 2 reduced [adrenodoxin] + O2 + 2 H(+) = 1alpha,25-dihydroxyvitamin D2 + 2 oxidized [adrenodoxin] + H2O</text>
        <dbReference type="Rhea" id="RHEA:49048"/>
        <dbReference type="Rhea" id="RHEA-COMP:9998"/>
        <dbReference type="Rhea" id="RHEA-COMP:9999"/>
        <dbReference type="ChEBI" id="CHEBI:15377"/>
        <dbReference type="ChEBI" id="CHEBI:15378"/>
        <dbReference type="ChEBI" id="CHEBI:15379"/>
        <dbReference type="ChEBI" id="CHEBI:33737"/>
        <dbReference type="ChEBI" id="CHEBI:33738"/>
        <dbReference type="ChEBI" id="CHEBI:86319"/>
        <dbReference type="ChEBI" id="CHEBI:86320"/>
    </reaction>
    <physiologicalReaction direction="left-to-right" evidence="15">
        <dbReference type="Rhea" id="RHEA:49049"/>
    </physiologicalReaction>
</comment>
<comment type="cofactor">
    <cofactor evidence="2">
        <name>heme</name>
        <dbReference type="ChEBI" id="CHEBI:30413"/>
    </cofactor>
</comment>
<comment type="activity regulation">
    <text evidence="8">Activated by cardiolipin and dioleoyl phosphatidylethanolamine (DOPE), phospholipids found in the inner mitochondrial membrane. Inhibited by high substrate concentration.</text>
</comment>
<comment type="biophysicochemical properties">
    <kinetics>
        <KM evidence="5">2.7 uM for 25-hydroxyvitamin D3</KM>
        <KM evidence="5">1.1 uM for 24,25-dihydroxyvitamin D3</KM>
        <KM evidence="8">0.9 uM for 25-hydroxyvitamin D3</KM>
        <Vmax evidence="5">3.9 pmol/min/mg enzyme toward 25-hydroxyvitamin D3</Vmax>
        <Vmax evidence="5">3.2 pmol/min/mg enzyme toward 24,25-dihydroxyvitamin D3</Vmax>
        <Vmax evidence="8">1.3 nmol/min/mg enzyme toward 25-hydroxyvitamin D3</Vmax>
    </kinetics>
</comment>
<comment type="pathway">
    <text evidence="10">Hormone biosynthesis; vitamin D biosynthesis.</text>
</comment>
<comment type="subcellular location">
    <subcellularLocation>
        <location>Mitochondrion membrane</location>
    </subcellularLocation>
</comment>
<comment type="tissue specificity">
    <text evidence="9 10">Kidney.</text>
</comment>
<comment type="disease" evidence="4 6 7 10 11">
    <disease id="DI-02414">
        <name>Rickets vitamin D-dependent 1A</name>
        <acronym>VDDR1A</acronym>
        <description>A disorder caused by a selective deficiency of the active form of vitamin D (1,25-dihydroxyvitamin D3) and resulting in defective bone mineralization and clinical features of rickets.</description>
        <dbReference type="MIM" id="264700"/>
    </disease>
    <text>The disease is caused by variants affecting the gene represented in this entry.</text>
</comment>
<comment type="similarity">
    <text evidence="13">Belongs to the cytochrome P450 family.</text>
</comment>
<dbReference type="EC" id="1.14.15.18" evidence="5"/>
<dbReference type="EMBL" id="AF027152">
    <property type="protein sequence ID" value="AAC51854.1"/>
    <property type="molecule type" value="Genomic_DNA"/>
</dbReference>
<dbReference type="EMBL" id="AB005038">
    <property type="protein sequence ID" value="BAA23416.1"/>
    <property type="molecule type" value="mRNA"/>
</dbReference>
<dbReference type="EMBL" id="AB005989">
    <property type="protein sequence ID" value="BAA22656.1"/>
    <property type="molecule type" value="mRNA"/>
</dbReference>
<dbReference type="EMBL" id="AB005990">
    <property type="protein sequence ID" value="BAA22657.1"/>
    <property type="molecule type" value="Genomic_DNA"/>
</dbReference>
<dbReference type="EMBL" id="AB006987">
    <property type="protein sequence ID" value="BAA23418.1"/>
    <property type="molecule type" value="Genomic_DNA"/>
</dbReference>
<dbReference type="EMBL" id="AF020192">
    <property type="protein sequence ID" value="AAC51853.1"/>
    <property type="molecule type" value="mRNA"/>
</dbReference>
<dbReference type="EMBL" id="AF256213">
    <property type="protein sequence ID" value="AAG00416.1"/>
    <property type="molecule type" value="Genomic_DNA"/>
</dbReference>
<dbReference type="EMBL" id="AF246895">
    <property type="protein sequence ID" value="AAF64299.1"/>
    <property type="molecule type" value="mRNA"/>
</dbReference>
<dbReference type="EMBL" id="AY288916">
    <property type="protein sequence ID" value="AAP31972.1"/>
    <property type="molecule type" value="Genomic_DNA"/>
</dbReference>
<dbReference type="EMBL" id="AK314953">
    <property type="protein sequence ID" value="BAG37458.1"/>
    <property type="molecule type" value="mRNA"/>
</dbReference>
<dbReference type="EMBL" id="CH471054">
    <property type="protein sequence ID" value="EAW97067.1"/>
    <property type="molecule type" value="Genomic_DNA"/>
</dbReference>
<dbReference type="EMBL" id="BC136386">
    <property type="protein sequence ID" value="AAI36387.1"/>
    <property type="molecule type" value="mRNA"/>
</dbReference>
<dbReference type="CCDS" id="CCDS8954.1"/>
<dbReference type="PIR" id="JC5713">
    <property type="entry name" value="JC5713"/>
</dbReference>
<dbReference type="RefSeq" id="NP_000776.1">
    <property type="nucleotide sequence ID" value="NM_000785.4"/>
</dbReference>
<dbReference type="SMR" id="O15528"/>
<dbReference type="BioGRID" id="107966">
    <property type="interactions" value="12"/>
</dbReference>
<dbReference type="FunCoup" id="O15528">
    <property type="interactions" value="498"/>
</dbReference>
<dbReference type="IntAct" id="O15528">
    <property type="interactions" value="2"/>
</dbReference>
<dbReference type="STRING" id="9606.ENSP00000228606"/>
<dbReference type="BindingDB" id="O15528"/>
<dbReference type="ChEMBL" id="CHEMBL5993"/>
<dbReference type="DrugBank" id="DB01436">
    <property type="generic name" value="Alfacalcidol"/>
</dbReference>
<dbReference type="DrugBank" id="DB00146">
    <property type="generic name" value="Calcifediol"/>
</dbReference>
<dbReference type="DrugBank" id="DB01285">
    <property type="generic name" value="Corticotropin"/>
</dbReference>
<dbReference type="DrugBank" id="DB00153">
    <property type="generic name" value="Ergocalciferol"/>
</dbReference>
<dbReference type="DrugBank" id="DB11094">
    <property type="generic name" value="Vitamin D"/>
</dbReference>
<dbReference type="DrugCentral" id="O15528"/>
<dbReference type="GuidetoPHARMACOLOGY" id="1370"/>
<dbReference type="SwissLipids" id="SLP:000001478"/>
<dbReference type="GlyGen" id="O15528">
    <property type="glycosylation" value="2 sites"/>
</dbReference>
<dbReference type="PhosphoSitePlus" id="O15528"/>
<dbReference type="BioMuta" id="CYP27B1"/>
<dbReference type="MassIVE" id="O15528"/>
<dbReference type="PaxDb" id="9606-ENSP00000228606"/>
<dbReference type="PeptideAtlas" id="O15528"/>
<dbReference type="ProteomicsDB" id="48734"/>
<dbReference type="TopDownProteomics" id="O15528"/>
<dbReference type="Antibodypedia" id="55993">
    <property type="antibodies" value="133 antibodies from 24 providers"/>
</dbReference>
<dbReference type="DNASU" id="1594"/>
<dbReference type="Ensembl" id="ENST00000228606.9">
    <property type="protein sequence ID" value="ENSP00000228606.4"/>
    <property type="gene ID" value="ENSG00000111012.12"/>
</dbReference>
<dbReference type="GeneID" id="1594"/>
<dbReference type="KEGG" id="hsa:1594"/>
<dbReference type="MANE-Select" id="ENST00000228606.9">
    <property type="protein sequence ID" value="ENSP00000228606.4"/>
    <property type="RefSeq nucleotide sequence ID" value="NM_000785.4"/>
    <property type="RefSeq protein sequence ID" value="NP_000776.1"/>
</dbReference>
<dbReference type="UCSC" id="uc001spz.2">
    <property type="organism name" value="human"/>
</dbReference>
<dbReference type="AGR" id="HGNC:2606"/>
<dbReference type="CTD" id="1594"/>
<dbReference type="DisGeNET" id="1594"/>
<dbReference type="GeneCards" id="CYP27B1"/>
<dbReference type="HGNC" id="HGNC:2606">
    <property type="gene designation" value="CYP27B1"/>
</dbReference>
<dbReference type="HPA" id="ENSG00000111012">
    <property type="expression patterns" value="Tissue enhanced (kidney, thyroid gland)"/>
</dbReference>
<dbReference type="MalaCards" id="CYP27B1"/>
<dbReference type="MIM" id="264700">
    <property type="type" value="phenotype"/>
</dbReference>
<dbReference type="MIM" id="609506">
    <property type="type" value="gene"/>
</dbReference>
<dbReference type="neXtProt" id="NX_O15528"/>
<dbReference type="OpenTargets" id="ENSG00000111012"/>
<dbReference type="Orphanet" id="289157">
    <property type="disease" value="Hypocalcemic vitamin D-dependent rickets"/>
</dbReference>
<dbReference type="PharmGKB" id="PA27099"/>
<dbReference type="VEuPathDB" id="HostDB:ENSG00000111012"/>
<dbReference type="eggNOG" id="KOG0159">
    <property type="taxonomic scope" value="Eukaryota"/>
</dbReference>
<dbReference type="GeneTree" id="ENSGT00950000182905"/>
<dbReference type="HOGENOM" id="CLU_001570_28_3_1"/>
<dbReference type="InParanoid" id="O15528"/>
<dbReference type="OMA" id="KPWKTFC"/>
<dbReference type="OrthoDB" id="3945418at2759"/>
<dbReference type="PAN-GO" id="O15528">
    <property type="GO annotations" value="5 GO annotations based on evolutionary models"/>
</dbReference>
<dbReference type="PhylomeDB" id="O15528"/>
<dbReference type="TreeFam" id="TF105094"/>
<dbReference type="BRENDA" id="1.14.15.18">
    <property type="organism ID" value="2681"/>
</dbReference>
<dbReference type="PathwayCommons" id="O15528"/>
<dbReference type="Reactome" id="R-HSA-196791">
    <property type="pathway name" value="Vitamin D (calciferol) metabolism"/>
</dbReference>
<dbReference type="Reactome" id="R-HSA-211916">
    <property type="pathway name" value="Vitamins"/>
</dbReference>
<dbReference type="Reactome" id="R-HSA-5579014">
    <property type="pathway name" value="Defective CYP27B1 causes VDDR1A"/>
</dbReference>
<dbReference type="SABIO-RK" id="O15528"/>
<dbReference type="SignaLink" id="O15528"/>
<dbReference type="SIGNOR" id="O15528"/>
<dbReference type="UniPathway" id="UPA00954"/>
<dbReference type="BioGRID-ORCS" id="1594">
    <property type="hits" value="64 hits in 1148 CRISPR screens"/>
</dbReference>
<dbReference type="GeneWiki" id="25-Hydroxyvitamin_D3_1-alpha-hydroxylase"/>
<dbReference type="GenomeRNAi" id="1594"/>
<dbReference type="Pharos" id="O15528">
    <property type="development level" value="Tchem"/>
</dbReference>
<dbReference type="PRO" id="PR:O15528"/>
<dbReference type="Proteomes" id="UP000005640">
    <property type="component" value="Chromosome 12"/>
</dbReference>
<dbReference type="RNAct" id="O15528">
    <property type="molecule type" value="protein"/>
</dbReference>
<dbReference type="Bgee" id="ENSG00000111012">
    <property type="expression patterns" value="Expressed in nephron tubule and 107 other cell types or tissues"/>
</dbReference>
<dbReference type="ExpressionAtlas" id="O15528">
    <property type="expression patterns" value="baseline and differential"/>
</dbReference>
<dbReference type="GO" id="GO:0005737">
    <property type="term" value="C:cytoplasm"/>
    <property type="evidence" value="ECO:0000314"/>
    <property type="project" value="BHF-UCL"/>
</dbReference>
<dbReference type="GO" id="GO:0005741">
    <property type="term" value="C:mitochondrial outer membrane"/>
    <property type="evidence" value="ECO:0000304"/>
    <property type="project" value="Reactome"/>
</dbReference>
<dbReference type="GO" id="GO:0005739">
    <property type="term" value="C:mitochondrion"/>
    <property type="evidence" value="ECO:0006056"/>
    <property type="project" value="FlyBase"/>
</dbReference>
<dbReference type="GO" id="GO:0004498">
    <property type="term" value="F:calcidiol 1-monooxygenase activity"/>
    <property type="evidence" value="ECO:0000314"/>
    <property type="project" value="UniProtKB"/>
</dbReference>
<dbReference type="GO" id="GO:0020037">
    <property type="term" value="F:heme binding"/>
    <property type="evidence" value="ECO:0007669"/>
    <property type="project" value="InterPro"/>
</dbReference>
<dbReference type="GO" id="GO:0005506">
    <property type="term" value="F:iron ion binding"/>
    <property type="evidence" value="ECO:0007669"/>
    <property type="project" value="InterPro"/>
</dbReference>
<dbReference type="GO" id="GO:0062185">
    <property type="term" value="F:secalciferol 1-monooxygenase activity"/>
    <property type="evidence" value="ECO:0000314"/>
    <property type="project" value="UniProtKB"/>
</dbReference>
<dbReference type="GO" id="GO:0030282">
    <property type="term" value="P:bone mineralization"/>
    <property type="evidence" value="ECO:0000270"/>
    <property type="project" value="BHF-UCL"/>
</dbReference>
<dbReference type="GO" id="GO:0036378">
    <property type="term" value="P:calcitriol biosynthetic process from calciol"/>
    <property type="evidence" value="ECO:0000314"/>
    <property type="project" value="UniProtKB"/>
</dbReference>
<dbReference type="GO" id="GO:0055074">
    <property type="term" value="P:calcium ion homeostasis"/>
    <property type="evidence" value="ECO:0000315"/>
    <property type="project" value="BHF-UCL"/>
</dbReference>
<dbReference type="GO" id="GO:0006816">
    <property type="term" value="P:calcium ion transport"/>
    <property type="evidence" value="ECO:0000250"/>
    <property type="project" value="BHF-UCL"/>
</dbReference>
<dbReference type="GO" id="GO:0046697">
    <property type="term" value="P:decidualization"/>
    <property type="evidence" value="ECO:0000270"/>
    <property type="project" value="BHF-UCL"/>
</dbReference>
<dbReference type="GO" id="GO:0070314">
    <property type="term" value="P:G1 to G0 transition"/>
    <property type="evidence" value="ECO:0000315"/>
    <property type="project" value="BHF-UCL"/>
</dbReference>
<dbReference type="GO" id="GO:0030308">
    <property type="term" value="P:negative regulation of cell growth"/>
    <property type="evidence" value="ECO:0000315"/>
    <property type="project" value="BHF-UCL"/>
</dbReference>
<dbReference type="GO" id="GO:0008285">
    <property type="term" value="P:negative regulation of cell population proliferation"/>
    <property type="evidence" value="ECO:0000314"/>
    <property type="project" value="BHF-UCL"/>
</dbReference>
<dbReference type="GO" id="GO:0045618">
    <property type="term" value="P:positive regulation of keratinocyte differentiation"/>
    <property type="evidence" value="ECO:0000315"/>
    <property type="project" value="BHF-UCL"/>
</dbReference>
<dbReference type="GO" id="GO:0070564">
    <property type="term" value="P:positive regulation of vitamin D receptor signaling pathway"/>
    <property type="evidence" value="ECO:0000314"/>
    <property type="project" value="BHF-UCL"/>
</dbReference>
<dbReference type="GO" id="GO:0030500">
    <property type="term" value="P:regulation of bone mineralization"/>
    <property type="evidence" value="ECO:0000315"/>
    <property type="project" value="BHF-UCL"/>
</dbReference>
<dbReference type="GO" id="GO:0043627">
    <property type="term" value="P:response to estrogen"/>
    <property type="evidence" value="ECO:0000270"/>
    <property type="project" value="BHF-UCL"/>
</dbReference>
<dbReference type="GO" id="GO:0032496">
    <property type="term" value="P:response to lipopolysaccharide"/>
    <property type="evidence" value="ECO:0000314"/>
    <property type="project" value="BHF-UCL"/>
</dbReference>
<dbReference type="GO" id="GO:0034341">
    <property type="term" value="P:response to type II interferon"/>
    <property type="evidence" value="ECO:0000314"/>
    <property type="project" value="BHF-UCL"/>
</dbReference>
<dbReference type="GO" id="GO:0033280">
    <property type="term" value="P:response to vitamin D"/>
    <property type="evidence" value="ECO:0000314"/>
    <property type="project" value="BHF-UCL"/>
</dbReference>
<dbReference type="GO" id="GO:0042369">
    <property type="term" value="P:vitamin D catabolic process"/>
    <property type="evidence" value="ECO:0000318"/>
    <property type="project" value="GO_Central"/>
</dbReference>
<dbReference type="GO" id="GO:0042359">
    <property type="term" value="P:vitamin D metabolic process"/>
    <property type="evidence" value="ECO:0000314"/>
    <property type="project" value="BHF-UCL"/>
</dbReference>
<dbReference type="GO" id="GO:0006766">
    <property type="term" value="P:vitamin metabolic process"/>
    <property type="evidence" value="ECO:0000304"/>
    <property type="project" value="Reactome"/>
</dbReference>
<dbReference type="CDD" id="cd20648">
    <property type="entry name" value="CYP27B1"/>
    <property type="match status" value="1"/>
</dbReference>
<dbReference type="FunFam" id="1.10.630.10:FF:000006">
    <property type="entry name" value="Cytochrome P450 302a1, mitochondrial"/>
    <property type="match status" value="1"/>
</dbReference>
<dbReference type="Gene3D" id="1.10.630.10">
    <property type="entry name" value="Cytochrome P450"/>
    <property type="match status" value="1"/>
</dbReference>
<dbReference type="InterPro" id="IPR050479">
    <property type="entry name" value="CYP11_CYP27_families"/>
</dbReference>
<dbReference type="InterPro" id="IPR001128">
    <property type="entry name" value="Cyt_P450"/>
</dbReference>
<dbReference type="InterPro" id="IPR017972">
    <property type="entry name" value="Cyt_P450_CS"/>
</dbReference>
<dbReference type="InterPro" id="IPR002401">
    <property type="entry name" value="Cyt_P450_E_grp-I"/>
</dbReference>
<dbReference type="InterPro" id="IPR036396">
    <property type="entry name" value="Cyt_P450_sf"/>
</dbReference>
<dbReference type="PANTHER" id="PTHR24279">
    <property type="entry name" value="CYTOCHROME P450"/>
    <property type="match status" value="1"/>
</dbReference>
<dbReference type="PANTHER" id="PTHR24279:SF121">
    <property type="entry name" value="CYTOCHROME P450 FAMILY 27 SUBFAMILY B MEMBER 1"/>
    <property type="match status" value="1"/>
</dbReference>
<dbReference type="Pfam" id="PF00067">
    <property type="entry name" value="p450"/>
    <property type="match status" value="1"/>
</dbReference>
<dbReference type="PRINTS" id="PR00463">
    <property type="entry name" value="EP450I"/>
</dbReference>
<dbReference type="PRINTS" id="PR00385">
    <property type="entry name" value="P450"/>
</dbReference>
<dbReference type="SUPFAM" id="SSF48264">
    <property type="entry name" value="Cytochrome P450"/>
    <property type="match status" value="1"/>
</dbReference>
<dbReference type="PROSITE" id="PS00086">
    <property type="entry name" value="CYTOCHROME_P450"/>
    <property type="match status" value="1"/>
</dbReference>
<sequence>MTQTLKYASRVFHRVRWAPELGASLGYREYHSARRSLADIPGPSTPSFLAELFCKGGLSRLHELQVQGAAHFGPVWLASFGTVRTVYVAAPALVEELLRQEGPRPERCSFSPWTEHRRCRQRACGLLTAEGEEWQRLRSLLAPLLLRPQAAARYAGTLNNVVCDLVRRLRRQRGRGTGPPALVRDVAGEFYKFGLEGIAAVLLGSRLGCLEAQVPPDTETFIRAVGSVFVSTLLTMAMPHWLRHLVPGPWGRLCRDWDQMFAFAQRHVERREAEAAMRNGGQPEKDLESGAHLTHFLFREELPAQSILGNVTELLLAGVDTVSNTLSWALYELSRHPEVQTALHSEITAALSPGSSAYPSATVLSQLPLLKAVVKEVLRLYPVVPGNSRVPDKDIHVGDYIIPKNTLVTLCHYATSRDPAQFPEPNSFRPARWLGEGPTPHPFASLPFGFGKRSCMGRRLAELELQMALAQILTHFEVQPEPGAAPVRPKTRTVLVPERSINLQFLDR</sequence>
<feature type="transit peptide" description="Mitochondrion" evidence="3">
    <location>
        <begin position="1"/>
        <end status="unknown"/>
    </location>
</feature>
<feature type="chain" id="PRO_0000003622" description="25-hydroxyvitamin D-1 alpha hydroxylase, mitochondrial">
    <location>
        <begin status="unknown"/>
        <end position="508"/>
    </location>
</feature>
<feature type="binding site" description="axial binding residue" evidence="1">
    <location>
        <position position="455"/>
    </location>
    <ligand>
        <name>heme</name>
        <dbReference type="ChEBI" id="CHEBI:30413"/>
    </ligand>
    <ligandPart>
        <name>Fe</name>
        <dbReference type="ChEBI" id="CHEBI:18248"/>
    </ligandPart>
</feature>
<feature type="sequence variant" id="VAR_016969" description="In VDDR1A; dbSNP:rs868704228." evidence="11">
    <original>Q</original>
    <variation>H</variation>
    <location>
        <position position="65"/>
    </location>
</feature>
<feature type="sequence variant" id="VAR_016952" description="In VDDR1A; complete loss of activity; dbSNP:rs28934604." evidence="10">
    <original>R</original>
    <variation>H</variation>
    <location>
        <position position="107"/>
    </location>
</feature>
<feature type="sequence variant" id="VAR_016953" description="In VDDR1A; complete loss of activity; dbSNP:rs28934605." evidence="10">
    <original>G</original>
    <variation>E</variation>
    <location>
        <position position="125"/>
    </location>
</feature>
<feature type="sequence variant" id="VAR_018841" description="In dbSNP:rs8176344." evidence="12">
    <original>V</original>
    <variation>L</variation>
    <location>
        <position position="166"/>
    </location>
</feature>
<feature type="sequence variant" id="VAR_016954" description="In VDDR1A; 22% of wild-type activity; dbSNP:rs118204012." evidence="7">
    <original>E</original>
    <variation>G</variation>
    <location>
        <position position="189"/>
    </location>
</feature>
<feature type="sequence variant" id="VAR_016967" description="In VDDR1A; 11% of wild-type activity." evidence="11">
    <original>E</original>
    <variation>K</variation>
    <location>
        <position position="189"/>
    </location>
</feature>
<feature type="sequence variant" id="VAR_016955" description="In VDDR1A; complete loss of activity; dbSNP:rs118204007." evidence="6">
    <original>T</original>
    <variation>R</variation>
    <location>
        <position position="321"/>
    </location>
</feature>
<feature type="sequence variant" id="VAR_016970" description="In VDDR1A." evidence="4">
    <original>S</original>
    <variation>Y</variation>
    <location>
        <position position="323"/>
    </location>
</feature>
<feature type="sequence variant" id="VAR_016956" description="In VDDR1A; complete loss of activity; dbSNP:rs28934606." evidence="10">
    <original>R</original>
    <variation>P</variation>
    <location>
        <position position="335"/>
    </location>
</feature>
<feature type="sequence variant" id="VAR_016957" description="In VDDR1A; 2.3% of wild-type activity; dbSNP:rs118204011." evidence="7">
    <original>L</original>
    <variation>F</variation>
    <location>
        <position position="343"/>
    </location>
</feature>
<feature type="sequence variant" id="VAR_016958" description="In VDDR1A; complete loss of activity; dbSNP:rs28934607." evidence="10">
    <original>P</original>
    <variation>S</variation>
    <location>
        <position position="382"/>
    </location>
</feature>
<feature type="sequence variant" id="VAR_016968" description="In VDDR1A; complete loss of activity; dbSNP:rs118204010." evidence="6">
    <original>R</original>
    <variation>C</variation>
    <location>
        <position position="389"/>
    </location>
</feature>
<feature type="sequence variant" id="VAR_016960" description="In VDDR1A; complete loss of activity; dbSNP:rs118204010." evidence="7">
    <original>R</original>
    <variation>G</variation>
    <location>
        <position position="389"/>
    </location>
</feature>
<feature type="sequence variant" id="VAR_016959" description="In VDDR1A; complete loss of activity; dbSNP:rs118204009." evidence="7 11">
    <original>R</original>
    <variation>H</variation>
    <location>
        <position position="389"/>
    </location>
</feature>
<feature type="sequence variant" id="VAR_016961" description="In VDDR1A; dbSNP:rs118204008." evidence="7 11">
    <original>T</original>
    <variation>I</variation>
    <location>
        <position position="409"/>
    </location>
</feature>
<feature type="sequence variant" id="VAR_016971" description="In VDDR1A; dbSNP:rs568165874." evidence="11">
    <original>R</original>
    <variation>P</variation>
    <location>
        <position position="429"/>
    </location>
</feature>
<feature type="sequence variant" id="VAR_016972" description="In VDDR1A; dbSNP:rs767480544." evidence="11">
    <original>R</original>
    <variation>C</variation>
    <location>
        <position position="453"/>
    </location>
</feature>
<feature type="sequence variant" id="VAR_016973" description="In VDDR1A." evidence="4">
    <original>V</original>
    <variation>G</variation>
    <location>
        <position position="478"/>
    </location>
</feature>
<feature type="sequence variant" id="VAR_016974" description="In VDDR1A; dbSNP:rs1161799032." evidence="11">
    <original>P</original>
    <variation>R</variation>
    <location>
        <position position="497"/>
    </location>
</feature>
<feature type="sequence conflict" description="In Ref. 7; BAG37458." evidence="13" ref="7">
    <original>D</original>
    <variation>N</variation>
    <location>
        <position position="320"/>
    </location>
</feature>
<proteinExistence type="evidence at protein level"/>
<reference key="1">
    <citation type="journal article" date="1997" name="DNA Cell Biol.">
        <title>Complete structure of the human gene for the vitamin D 1alpha-hydroxylase, P450c1alpha.</title>
        <authorList>
            <person name="Fu G.K."/>
            <person name="Portale A.P."/>
            <person name="Miller W.L."/>
        </authorList>
    </citation>
    <scope>NUCLEOTIDE SEQUENCE [GENOMIC DNA]</scope>
    <scope>TISSUE SPECIFICITY</scope>
</reference>
<reference key="2">
    <citation type="journal article" date="1997" name="Biochem. Biophys. Res. Commun.">
        <title>Molecular cloning of cDNA and genomic DNA for human 25-hydroxyvitamin D3 1 alpha-hydroxylase.</title>
        <authorList>
            <person name="Monkawa T."/>
            <person name="Yoshida T."/>
            <person name="Wakino S."/>
            <person name="Shinki T."/>
            <person name="Anazawa H."/>
            <person name="Deluca H.F."/>
            <person name="Suda T."/>
            <person name="Hayashi M."/>
            <person name="Saruta T."/>
        </authorList>
    </citation>
    <scope>NUCLEOTIDE SEQUENCE [GENOMIC DNA / MRNA]</scope>
    <source>
        <tissue>Kidney</tissue>
    </source>
</reference>
<reference key="3">
    <citation type="journal article" date="1997" name="Mol. Endocrinol.">
        <title>Cloning of human 25-hydroxyvitamin D-1 alpha-hydroxylase and mutations causing vitamin D-dependent rickets type 1.</title>
        <authorList>
            <person name="Fu G.K."/>
            <person name="Lin D."/>
            <person name="Zhang Y.H."/>
            <person name="Bikle D.D."/>
            <person name="Shackleton C.H."/>
            <person name="Miller W.L."/>
            <person name="Portale A.A."/>
        </authorList>
    </citation>
    <scope>NUCLEOTIDE SEQUENCE [MRNA]</scope>
</reference>
<reference key="4">
    <citation type="journal article" date="2002" name="Mol. Cancer Res.">
        <title>Targeted disruption of the 25-hydroxyvitamin D3 1alpha-hydroxylase gene in ras-transformed keratinocytes demonstrates that locally produced 1alpha,25-dihydroxyvitamin D3 suppresses growth and induces differentiation in an autocrine fashion.</title>
        <authorList>
            <person name="Huang D.C."/>
            <person name="Papavasiliou V."/>
            <person name="Rhim J.S."/>
            <person name="Horst R.L."/>
            <person name="Kremer R."/>
        </authorList>
    </citation>
    <scope>NUCLEOTIDE SEQUENCE [GENOMIC DNA]</scope>
</reference>
<reference key="5">
    <citation type="submission" date="2000-03" db="EMBL/GenBank/DDBJ databases">
        <title>Targeted disruption of the 25-hydroxyvitamin D3 1 a-hydroxylase gene in a Ras-transformed human keratinocyte cell line: evidence for an autocrine growth regulatory function of 1 alpha, 25-dihydroxyvitamin D3 in vitro and in vivo.</title>
        <authorList>
            <person name="Huang D.C."/>
            <person name="Papavasiliou J."/>
            <person name="Rhim J."/>
            <person name="Kremer R."/>
        </authorList>
    </citation>
    <scope>NUCLEOTIDE SEQUENCE [MRNA]</scope>
</reference>
<reference key="6">
    <citation type="submission" date="2003-04" db="EMBL/GenBank/DDBJ databases">
        <authorList>
            <consortium name="NIEHS SNPs program"/>
        </authorList>
    </citation>
    <scope>NUCLEOTIDE SEQUENCE [GENOMIC DNA]</scope>
    <scope>VARIANT LEU-166</scope>
</reference>
<reference key="7">
    <citation type="journal article" date="2004" name="Nat. Genet.">
        <title>Complete sequencing and characterization of 21,243 full-length human cDNAs.</title>
        <authorList>
            <person name="Ota T."/>
            <person name="Suzuki Y."/>
            <person name="Nishikawa T."/>
            <person name="Otsuki T."/>
            <person name="Sugiyama T."/>
            <person name="Irie R."/>
            <person name="Wakamatsu A."/>
            <person name="Hayashi K."/>
            <person name="Sato H."/>
            <person name="Nagai K."/>
            <person name="Kimura K."/>
            <person name="Makita H."/>
            <person name="Sekine M."/>
            <person name="Obayashi M."/>
            <person name="Nishi T."/>
            <person name="Shibahara T."/>
            <person name="Tanaka T."/>
            <person name="Ishii S."/>
            <person name="Yamamoto J."/>
            <person name="Saito K."/>
            <person name="Kawai Y."/>
            <person name="Isono Y."/>
            <person name="Nakamura Y."/>
            <person name="Nagahari K."/>
            <person name="Murakami K."/>
            <person name="Yasuda T."/>
            <person name="Iwayanagi T."/>
            <person name="Wagatsuma M."/>
            <person name="Shiratori A."/>
            <person name="Sudo H."/>
            <person name="Hosoiri T."/>
            <person name="Kaku Y."/>
            <person name="Kodaira H."/>
            <person name="Kondo H."/>
            <person name="Sugawara M."/>
            <person name="Takahashi M."/>
            <person name="Kanda K."/>
            <person name="Yokoi T."/>
            <person name="Furuya T."/>
            <person name="Kikkawa E."/>
            <person name="Omura Y."/>
            <person name="Abe K."/>
            <person name="Kamihara K."/>
            <person name="Katsuta N."/>
            <person name="Sato K."/>
            <person name="Tanikawa M."/>
            <person name="Yamazaki M."/>
            <person name="Ninomiya K."/>
            <person name="Ishibashi T."/>
            <person name="Yamashita H."/>
            <person name="Murakawa K."/>
            <person name="Fujimori K."/>
            <person name="Tanai H."/>
            <person name="Kimata M."/>
            <person name="Watanabe M."/>
            <person name="Hiraoka S."/>
            <person name="Chiba Y."/>
            <person name="Ishida S."/>
            <person name="Ono Y."/>
            <person name="Takiguchi S."/>
            <person name="Watanabe S."/>
            <person name="Yosida M."/>
            <person name="Hotuta T."/>
            <person name="Kusano J."/>
            <person name="Kanehori K."/>
            <person name="Takahashi-Fujii A."/>
            <person name="Hara H."/>
            <person name="Tanase T.-O."/>
            <person name="Nomura Y."/>
            <person name="Togiya S."/>
            <person name="Komai F."/>
            <person name="Hara R."/>
            <person name="Takeuchi K."/>
            <person name="Arita M."/>
            <person name="Imose N."/>
            <person name="Musashino K."/>
            <person name="Yuuki H."/>
            <person name="Oshima A."/>
            <person name="Sasaki N."/>
            <person name="Aotsuka S."/>
            <person name="Yoshikawa Y."/>
            <person name="Matsunawa H."/>
            <person name="Ichihara T."/>
            <person name="Shiohata N."/>
            <person name="Sano S."/>
            <person name="Moriya S."/>
            <person name="Momiyama H."/>
            <person name="Satoh N."/>
            <person name="Takami S."/>
            <person name="Terashima Y."/>
            <person name="Suzuki O."/>
            <person name="Nakagawa S."/>
            <person name="Senoh A."/>
            <person name="Mizoguchi H."/>
            <person name="Goto Y."/>
            <person name="Shimizu F."/>
            <person name="Wakebe H."/>
            <person name="Hishigaki H."/>
            <person name="Watanabe T."/>
            <person name="Sugiyama A."/>
            <person name="Takemoto M."/>
            <person name="Kawakami B."/>
            <person name="Yamazaki M."/>
            <person name="Watanabe K."/>
            <person name="Kumagai A."/>
            <person name="Itakura S."/>
            <person name="Fukuzumi Y."/>
            <person name="Fujimori Y."/>
            <person name="Komiyama M."/>
            <person name="Tashiro H."/>
            <person name="Tanigami A."/>
            <person name="Fujiwara T."/>
            <person name="Ono T."/>
            <person name="Yamada K."/>
            <person name="Fujii Y."/>
            <person name="Ozaki K."/>
            <person name="Hirao M."/>
            <person name="Ohmori Y."/>
            <person name="Kawabata A."/>
            <person name="Hikiji T."/>
            <person name="Kobatake N."/>
            <person name="Inagaki H."/>
            <person name="Ikema Y."/>
            <person name="Okamoto S."/>
            <person name="Okitani R."/>
            <person name="Kawakami T."/>
            <person name="Noguchi S."/>
            <person name="Itoh T."/>
            <person name="Shigeta K."/>
            <person name="Senba T."/>
            <person name="Matsumura K."/>
            <person name="Nakajima Y."/>
            <person name="Mizuno T."/>
            <person name="Morinaga M."/>
            <person name="Sasaki M."/>
            <person name="Togashi T."/>
            <person name="Oyama M."/>
            <person name="Hata H."/>
            <person name="Watanabe M."/>
            <person name="Komatsu T."/>
            <person name="Mizushima-Sugano J."/>
            <person name="Satoh T."/>
            <person name="Shirai Y."/>
            <person name="Takahashi Y."/>
            <person name="Nakagawa K."/>
            <person name="Okumura K."/>
            <person name="Nagase T."/>
            <person name="Nomura N."/>
            <person name="Kikuchi H."/>
            <person name="Masuho Y."/>
            <person name="Yamashita R."/>
            <person name="Nakai K."/>
            <person name="Yada T."/>
            <person name="Nakamura Y."/>
            <person name="Ohara O."/>
            <person name="Isogai T."/>
            <person name="Sugano S."/>
        </authorList>
    </citation>
    <scope>NUCLEOTIDE SEQUENCE [LARGE SCALE MRNA]</scope>
    <source>
        <tissue>Kidney</tissue>
    </source>
</reference>
<reference key="8">
    <citation type="submission" date="2005-07" db="EMBL/GenBank/DDBJ databases">
        <authorList>
            <person name="Mural R.J."/>
            <person name="Istrail S."/>
            <person name="Sutton G."/>
            <person name="Florea L."/>
            <person name="Halpern A.L."/>
            <person name="Mobarry C.M."/>
            <person name="Lippert R."/>
            <person name="Walenz B."/>
            <person name="Shatkay H."/>
            <person name="Dew I."/>
            <person name="Miller J.R."/>
            <person name="Flanigan M.J."/>
            <person name="Edwards N.J."/>
            <person name="Bolanos R."/>
            <person name="Fasulo D."/>
            <person name="Halldorsson B.V."/>
            <person name="Hannenhalli S."/>
            <person name="Turner R."/>
            <person name="Yooseph S."/>
            <person name="Lu F."/>
            <person name="Nusskern D.R."/>
            <person name="Shue B.C."/>
            <person name="Zheng X.H."/>
            <person name="Zhong F."/>
            <person name="Delcher A.L."/>
            <person name="Huson D.H."/>
            <person name="Kravitz S.A."/>
            <person name="Mouchard L."/>
            <person name="Reinert K."/>
            <person name="Remington K.A."/>
            <person name="Clark A.G."/>
            <person name="Waterman M.S."/>
            <person name="Eichler E.E."/>
            <person name="Adams M.D."/>
            <person name="Hunkapiller M.W."/>
            <person name="Myers E.W."/>
            <person name="Venter J.C."/>
        </authorList>
    </citation>
    <scope>NUCLEOTIDE SEQUENCE [LARGE SCALE GENOMIC DNA]</scope>
</reference>
<reference key="9">
    <citation type="journal article" date="2004" name="Genome Res.">
        <title>The status, quality, and expansion of the NIH full-length cDNA project: the Mammalian Gene Collection (MGC).</title>
        <authorList>
            <consortium name="The MGC Project Team"/>
        </authorList>
    </citation>
    <scope>NUCLEOTIDE SEQUENCE [LARGE SCALE MRNA]</scope>
</reference>
<reference key="10">
    <citation type="journal article" date="1999" name="Eur. J. Biochem.">
        <title>Enzymatic properties of human 25-hydroxyvitamin D3 1alpha-hydroxylase coexpression with adrenodoxin and NADPH-adrenodoxin reductase in Escherichia coli.</title>
        <authorList>
            <person name="Sawada N."/>
            <person name="Sakaki T."/>
            <person name="Kitanaka S."/>
            <person name="Takeyama K."/>
            <person name="Kato S."/>
            <person name="Inouye K."/>
        </authorList>
    </citation>
    <scope>FUNCTION</scope>
    <scope>CATALYTIC ACTIVITY</scope>
    <scope>BIOPHYSICOCHEMICAL PROPERTIES</scope>
</reference>
<reference key="11">
    <citation type="journal article" date="2012" name="FEBS J.">
        <title>Expression of human CYP27B1 in Escherichia coli and characterization in phospholipid vesicles.</title>
        <authorList>
            <person name="Tang E.K.Y."/>
            <person name="Tieu E.W."/>
            <person name="Tuckey R.C."/>
        </authorList>
    </citation>
    <scope>FUNCTION</scope>
    <scope>CATALYTIC ACTIVITY</scope>
    <scope>ACTIVITY REGULATION</scope>
    <scope>BIOPHYSICOCHEMICAL PROPERTIES</scope>
</reference>
<reference key="12">
    <citation type="journal article" date="1998" name="N. Engl. J. Med.">
        <title>Inactivating mutations in the 25-hydroxyvitamin D3 1alpha-hydroxylase gene in patients with pseudovitamin D-deficiency rickets.</title>
        <authorList>
            <person name="Kitanaka S."/>
            <person name="Takeyama K."/>
            <person name="Murayama A."/>
            <person name="Sato T."/>
            <person name="Okumura K."/>
            <person name="Nogami M."/>
            <person name="Hasegawa Y."/>
            <person name="Niimi H."/>
            <person name="Yanagisawa J."/>
            <person name="Tanaka T."/>
            <person name="Kato S."/>
        </authorList>
    </citation>
    <scope>VARIANTS VDDR1A HIS-107; GLU-125; PRO-335 AND SER-382</scope>
    <scope>FUNCTION</scope>
    <scope>CATALYTIC ACTIVITY</scope>
    <scope>TISSUE SPECIFICITY</scope>
    <scope>PATHWAY</scope>
</reference>
<reference key="13">
    <citation type="journal article" date="1998" name="Am. J. Hum. Genet.">
        <title>Genetics of vitamin D 1-alpha-hydroxylase deficiency in 17 families.</title>
        <authorList>
            <person name="Wang J.T."/>
            <person name="Lin C.-J."/>
            <person name="Burridge S.M."/>
            <person name="Fu G.K."/>
            <person name="Labuda M."/>
            <person name="Portale A.A."/>
            <person name="Miller W.L."/>
        </authorList>
    </citation>
    <scope>VARIANTS VDDR1A HIS-65; LYS-189; HIS-389; ILE-409; PRO-429; CYS-453 AND ARG-497</scope>
</reference>
<reference key="14">
    <citation type="journal article" date="1999" name="J. Bone Miner. Res.">
        <title>Novel mutations in the 1alpha-hydroxylase (P450c1) gene in three families with pseudovitamin D-deficiency rickets resulting in loss of functional enzyme activity in blood-derived macrophages.</title>
        <authorList>
            <person name="Smith S.J."/>
            <person name="Rucka A.K."/>
            <person name="Berry J.L."/>
            <person name="Davies M."/>
            <person name="Mylchreest S."/>
            <person name="Paterson C.R."/>
            <person name="Heath D.A."/>
            <person name="Tassabehji M."/>
            <person name="Read A.P."/>
            <person name="Mee A.P."/>
            <person name="Mawer E.B."/>
        </authorList>
    </citation>
    <scope>VARIANTS VDDR1A TYR-323 AND GLY-478</scope>
</reference>
<reference key="15">
    <citation type="journal article" date="1999" name="J. Clin. Endocrinol. Metab.">
        <title>No enzyme activity of 25-hydroxyvitamin D3 1alpha-hydroxylase gene product in pseudovitamin D deficiency rickets, including that with mild clinical manifestation.</title>
        <authorList>
            <person name="Kitanaka S."/>
            <person name="Murayama A."/>
            <person name="Sakaki T."/>
            <person name="Inouye K."/>
            <person name="Seino Y."/>
            <person name="Fukumoto S."/>
            <person name="Shima M."/>
            <person name="Yukizane S."/>
            <person name="Takayanagi M."/>
            <person name="Niimi H."/>
            <person name="Takeyama K."/>
            <person name="Kato S."/>
        </authorList>
    </citation>
    <scope>VARIANTS VDDR1A ARG-321 AND CYS-389</scope>
    <scope>FUNCTION</scope>
    <scope>CATALYTIC ACTIVITY</scope>
</reference>
<reference key="16">
    <citation type="journal article" date="2002" name="J. Clin. Endocrinol. Metab.">
        <title>Novel gene mutations in patients with 1alpha-hydroxylase deficiency that confer partial enzyme activity in vitro.</title>
        <authorList>
            <person name="Wang X."/>
            <person name="Zhang M.Y."/>
            <person name="Miller W.L."/>
            <person name="Portale A.A."/>
        </authorList>
    </citation>
    <scope>VARIANTS VDDR1A GLY-189; PHE-343; GLY-389; HIS-389 AND ILE-409</scope>
    <scope>FUNCTION</scope>
    <scope>CATALYTIC ACTIVITY</scope>
</reference>
<name>CP27B_HUMAN</name>
<keyword id="KW-0225">Disease variant</keyword>
<keyword id="KW-0349">Heme</keyword>
<keyword id="KW-0408">Iron</keyword>
<keyword id="KW-0443">Lipid metabolism</keyword>
<keyword id="KW-0472">Membrane</keyword>
<keyword id="KW-0479">Metal-binding</keyword>
<keyword id="KW-0496">Mitochondrion</keyword>
<keyword id="KW-0503">Monooxygenase</keyword>
<keyword id="KW-0560">Oxidoreductase</keyword>
<keyword id="KW-1267">Proteomics identification</keyword>
<keyword id="KW-1185">Reference proteome</keyword>
<keyword id="KW-0809">Transit peptide</keyword>